<keyword id="KW-0963">Cytoplasm</keyword>
<keyword id="KW-1185">Reference proteome</keyword>
<accession>Q8R7Q8</accession>
<name>Y2340_CALS4</name>
<reference key="1">
    <citation type="journal article" date="2002" name="Genome Res.">
        <title>A complete sequence of the T. tengcongensis genome.</title>
        <authorList>
            <person name="Bao Q."/>
            <person name="Tian Y."/>
            <person name="Li W."/>
            <person name="Xu Z."/>
            <person name="Xuan Z."/>
            <person name="Hu S."/>
            <person name="Dong W."/>
            <person name="Yang J."/>
            <person name="Chen Y."/>
            <person name="Xue Y."/>
            <person name="Xu Y."/>
            <person name="Lai X."/>
            <person name="Huang L."/>
            <person name="Dong X."/>
            <person name="Ma Y."/>
            <person name="Ling L."/>
            <person name="Tan H."/>
            <person name="Chen R."/>
            <person name="Wang J."/>
            <person name="Yu J."/>
            <person name="Yang H."/>
        </authorList>
    </citation>
    <scope>NUCLEOTIDE SEQUENCE [LARGE SCALE GENOMIC DNA]</scope>
    <source>
        <strain>DSM 15242 / JCM 11007 / NBRC 100824 / MB4</strain>
    </source>
</reference>
<dbReference type="EMBL" id="AE008691">
    <property type="protein sequence ID" value="AAM25481.1"/>
    <property type="molecule type" value="Genomic_DNA"/>
</dbReference>
<dbReference type="RefSeq" id="WP_011026383.1">
    <property type="nucleotide sequence ID" value="NC_003869.1"/>
</dbReference>
<dbReference type="SMR" id="Q8R7Q8"/>
<dbReference type="STRING" id="273068.TTE2340"/>
<dbReference type="KEGG" id="tte:TTE2340"/>
<dbReference type="eggNOG" id="COG4224">
    <property type="taxonomic scope" value="Bacteria"/>
</dbReference>
<dbReference type="HOGENOM" id="CLU_173137_2_0_9"/>
<dbReference type="Proteomes" id="UP000000555">
    <property type="component" value="Chromosome"/>
</dbReference>
<dbReference type="GO" id="GO:0005737">
    <property type="term" value="C:cytoplasm"/>
    <property type="evidence" value="ECO:0007669"/>
    <property type="project" value="UniProtKB-SubCell"/>
</dbReference>
<dbReference type="Gene3D" id="1.10.287.540">
    <property type="entry name" value="Helix hairpin bin"/>
    <property type="match status" value="1"/>
</dbReference>
<dbReference type="HAMAP" id="MF_01103">
    <property type="entry name" value="UPF0291"/>
    <property type="match status" value="1"/>
</dbReference>
<dbReference type="InterPro" id="IPR009242">
    <property type="entry name" value="DUF896"/>
</dbReference>
<dbReference type="PANTHER" id="PTHR37300">
    <property type="entry name" value="UPF0291 PROTEIN CBO2609/CLC_2481"/>
    <property type="match status" value="1"/>
</dbReference>
<dbReference type="PANTHER" id="PTHR37300:SF1">
    <property type="entry name" value="UPF0291 PROTEIN YNZC"/>
    <property type="match status" value="1"/>
</dbReference>
<dbReference type="Pfam" id="PF05979">
    <property type="entry name" value="DUF896"/>
    <property type="match status" value="1"/>
</dbReference>
<dbReference type="SUPFAM" id="SSF158221">
    <property type="entry name" value="YnzC-like"/>
    <property type="match status" value="1"/>
</dbReference>
<organism>
    <name type="scientific">Caldanaerobacter subterraneus subsp. tengcongensis (strain DSM 15242 / JCM 11007 / NBRC 100824 / MB4)</name>
    <name type="common">Thermoanaerobacter tengcongensis</name>
    <dbReference type="NCBI Taxonomy" id="273068"/>
    <lineage>
        <taxon>Bacteria</taxon>
        <taxon>Bacillati</taxon>
        <taxon>Bacillota</taxon>
        <taxon>Clostridia</taxon>
        <taxon>Thermoanaerobacterales</taxon>
        <taxon>Thermoanaerobacteraceae</taxon>
        <taxon>Caldanaerobacter</taxon>
    </lineage>
</organism>
<sequence length="68" mass="8411">MITKEMIDRINFLYHKSKSEGLTEEEKEEQRRLREAYVKEIKERVKRELDNLFADASHHHHHCHHHEH</sequence>
<protein>
    <recommendedName>
        <fullName evidence="1">UPF0291 protein TTE2340</fullName>
    </recommendedName>
</protein>
<evidence type="ECO:0000255" key="1">
    <source>
        <dbReference type="HAMAP-Rule" id="MF_01103"/>
    </source>
</evidence>
<gene>
    <name type="ordered locus">TTE2340</name>
</gene>
<proteinExistence type="inferred from homology"/>
<feature type="chain" id="PRO_0000095008" description="UPF0291 protein TTE2340">
    <location>
        <begin position="1"/>
        <end position="68"/>
    </location>
</feature>
<comment type="subcellular location">
    <subcellularLocation>
        <location evidence="1">Cytoplasm</location>
    </subcellularLocation>
</comment>
<comment type="similarity">
    <text evidence="1">Belongs to the UPF0291 family.</text>
</comment>